<feature type="chain" id="PRO_1000083732" description="Autonomous glycyl radical cofactor">
    <location>
        <begin position="1"/>
        <end position="127"/>
    </location>
</feature>
<feature type="domain" description="Glycine radical" evidence="1">
    <location>
        <begin position="5"/>
        <end position="127"/>
    </location>
</feature>
<feature type="modified residue" description="Glycine radical" evidence="1">
    <location>
        <position position="102"/>
    </location>
</feature>
<name>GRCA_SALPB</name>
<reference key="1">
    <citation type="submission" date="2007-11" db="EMBL/GenBank/DDBJ databases">
        <authorList>
            <consortium name="The Salmonella enterica serovar Paratyphi B Genome Sequencing Project"/>
            <person name="McClelland M."/>
            <person name="Sanderson E.K."/>
            <person name="Porwollik S."/>
            <person name="Spieth J."/>
            <person name="Clifton W.S."/>
            <person name="Fulton R."/>
            <person name="Cordes M."/>
            <person name="Wollam A."/>
            <person name="Shah N."/>
            <person name="Pepin K."/>
            <person name="Bhonagiri V."/>
            <person name="Nash W."/>
            <person name="Johnson M."/>
            <person name="Thiruvilangam P."/>
            <person name="Wilson R."/>
        </authorList>
    </citation>
    <scope>NUCLEOTIDE SEQUENCE [LARGE SCALE GENOMIC DNA]</scope>
    <source>
        <strain>ATCC BAA-1250 / SPB7</strain>
    </source>
</reference>
<protein>
    <recommendedName>
        <fullName evidence="1">Autonomous glycyl radical cofactor</fullName>
    </recommendedName>
</protein>
<keyword id="KW-0556">Organic radical</keyword>
<accession>A9N0W4</accession>
<gene>
    <name evidence="1" type="primary">grcA</name>
    <name type="ordered locus">SPAB_00329</name>
</gene>
<organism>
    <name type="scientific">Salmonella paratyphi B (strain ATCC BAA-1250 / SPB7)</name>
    <dbReference type="NCBI Taxonomy" id="1016998"/>
    <lineage>
        <taxon>Bacteria</taxon>
        <taxon>Pseudomonadati</taxon>
        <taxon>Pseudomonadota</taxon>
        <taxon>Gammaproteobacteria</taxon>
        <taxon>Enterobacterales</taxon>
        <taxon>Enterobacteriaceae</taxon>
        <taxon>Salmonella</taxon>
    </lineage>
</organism>
<proteinExistence type="inferred from homology"/>
<comment type="function">
    <text evidence="1">Acts as a radical domain for damaged PFL and possibly other radical proteins.</text>
</comment>
<evidence type="ECO:0000255" key="1">
    <source>
        <dbReference type="HAMAP-Rule" id="MF_00806"/>
    </source>
</evidence>
<dbReference type="EMBL" id="CP000886">
    <property type="protein sequence ID" value="ABX65766.1"/>
    <property type="molecule type" value="Genomic_DNA"/>
</dbReference>
<dbReference type="RefSeq" id="WP_000627811.1">
    <property type="nucleotide sequence ID" value="NC_010102.1"/>
</dbReference>
<dbReference type="SMR" id="A9N0W4"/>
<dbReference type="GeneID" id="66757020"/>
<dbReference type="KEGG" id="spq:SPAB_00329"/>
<dbReference type="PATRIC" id="fig|1016998.12.peg.312"/>
<dbReference type="HOGENOM" id="CLU_133780_0_0_6"/>
<dbReference type="BioCyc" id="SENT1016998:SPAB_RS01350-MONOMER"/>
<dbReference type="Proteomes" id="UP000008556">
    <property type="component" value="Chromosome"/>
</dbReference>
<dbReference type="GO" id="GO:0005829">
    <property type="term" value="C:cytosol"/>
    <property type="evidence" value="ECO:0007669"/>
    <property type="project" value="TreeGrafter"/>
</dbReference>
<dbReference type="GO" id="GO:0008861">
    <property type="term" value="F:formate C-acetyltransferase activity"/>
    <property type="evidence" value="ECO:0007669"/>
    <property type="project" value="TreeGrafter"/>
</dbReference>
<dbReference type="FunFam" id="3.20.70.20:FF:000002">
    <property type="entry name" value="Autonomous glycyl radical cofactor"/>
    <property type="match status" value="1"/>
</dbReference>
<dbReference type="Gene3D" id="3.20.70.20">
    <property type="match status" value="1"/>
</dbReference>
<dbReference type="HAMAP" id="MF_00806">
    <property type="entry name" value="GrcA"/>
    <property type="match status" value="1"/>
</dbReference>
<dbReference type="InterPro" id="IPR050244">
    <property type="entry name" value="Auton_GlycylRad_Cofactor"/>
</dbReference>
<dbReference type="InterPro" id="IPR019777">
    <property type="entry name" value="Form_AcTrfase_GR_CS"/>
</dbReference>
<dbReference type="InterPro" id="IPR001150">
    <property type="entry name" value="Gly_radical"/>
</dbReference>
<dbReference type="InterPro" id="IPR011140">
    <property type="entry name" value="Glycyl_radical_cofactor_GrcA"/>
</dbReference>
<dbReference type="NCBIfam" id="TIGR04365">
    <property type="entry name" value="spare_glycyl"/>
    <property type="match status" value="1"/>
</dbReference>
<dbReference type="PANTHER" id="PTHR30191">
    <property type="entry name" value="FORMATE ACETYLTRANSFERASE"/>
    <property type="match status" value="1"/>
</dbReference>
<dbReference type="PANTHER" id="PTHR30191:SF0">
    <property type="entry name" value="FORMATE ACETYLTRANSFERASE 1"/>
    <property type="match status" value="1"/>
</dbReference>
<dbReference type="Pfam" id="PF01228">
    <property type="entry name" value="Gly_radical"/>
    <property type="match status" value="1"/>
</dbReference>
<dbReference type="PIRSF" id="PIRSF000378">
    <property type="entry name" value="Gly_radicl_yfiD"/>
    <property type="match status" value="1"/>
</dbReference>
<dbReference type="SUPFAM" id="SSF51998">
    <property type="entry name" value="PFL-like glycyl radical enzymes"/>
    <property type="match status" value="1"/>
</dbReference>
<dbReference type="PROSITE" id="PS00850">
    <property type="entry name" value="GLY_RADICAL_1"/>
    <property type="match status" value="1"/>
</dbReference>
<dbReference type="PROSITE" id="PS51149">
    <property type="entry name" value="GLY_RADICAL_2"/>
    <property type="match status" value="1"/>
</dbReference>
<sequence length="127" mass="14344">MITGIQITKAANDDLLNSFWLLDSEKGEARCIVAKSGFAEDEVVAVSKLGEIEYREIPMEVKPEVRVEGGQHLNVNVLRRETLEDAVKHPEKYPQLTIRVSGYAVRFNSLTPEQQRDVIARTFTESL</sequence>